<comment type="function">
    <text>May produce in vitro relaxation of rat arterial smooth muscle and constriction of intestinal smooth muscle. May target bradykinin receptors (BDKRB).</text>
</comment>
<comment type="subcellular location">
    <subcellularLocation>
        <location evidence="2">Secreted</location>
    </subcellularLocation>
</comment>
<comment type="tissue specificity">
    <text evidence="2">Expressed by the skin glands.</text>
</comment>
<comment type="mass spectrometry" mass="1059.45" method="MALDI" evidence="1"/>
<comment type="similarity">
    <text evidence="2">Belongs to the bradykinin-related peptide family.</text>
</comment>
<accession>P84673</accession>
<keyword id="KW-0878">Amphibian defense peptide</keyword>
<keyword id="KW-0903">Direct protein sequencing</keyword>
<keyword id="KW-1213">G-protein coupled receptor impairing toxin</keyword>
<keyword id="KW-0964">Secreted</keyword>
<keyword id="KW-0800">Toxin</keyword>
<keyword id="KW-0838">Vasoactive</keyword>
<keyword id="KW-0840">Vasodilator</keyword>
<proteinExistence type="evidence at protein level"/>
<sequence length="9" mass="1017">VPPGFTPFR</sequence>
<name>BRK3_PHYSA</name>
<organism>
    <name type="scientific">Phyllomedusa sauvagei</name>
    <name type="common">Sauvage's leaf frog</name>
    <dbReference type="NCBI Taxonomy" id="8395"/>
    <lineage>
        <taxon>Eukaryota</taxon>
        <taxon>Metazoa</taxon>
        <taxon>Chordata</taxon>
        <taxon>Craniata</taxon>
        <taxon>Vertebrata</taxon>
        <taxon>Euteleostomi</taxon>
        <taxon>Amphibia</taxon>
        <taxon>Batrachia</taxon>
        <taxon>Anura</taxon>
        <taxon>Neobatrachia</taxon>
        <taxon>Hyloidea</taxon>
        <taxon>Hylidae</taxon>
        <taxon>Phyllomedusinae</taxon>
        <taxon>Phyllomedusa</taxon>
    </lineage>
</organism>
<feature type="peptide" id="PRO_0000043523" description="[Val1,Thr6]-bradykinin">
    <location>
        <begin position="1"/>
        <end position="9"/>
    </location>
</feature>
<protein>
    <recommendedName>
        <fullName>[Val1,Thr6]-bradykinin</fullName>
    </recommendedName>
</protein>
<reference evidence="2" key="1">
    <citation type="journal article" date="2003" name="Peptides">
        <title>Cloning of the (Thr6)-phyllokinin precursor from Phyllomedusa sauvagei skin confirms a non-consensus tyrosine 0-sulfation motif.</title>
        <authorList>
            <person name="Chen T."/>
            <person name="Shaw C."/>
        </authorList>
    </citation>
    <scope>PROTEIN SEQUENCE</scope>
    <scope>MASS SPECTROMETRY</scope>
    <source>
        <tissue evidence="1">Skin</tissue>
    </source>
</reference>
<evidence type="ECO:0000269" key="1">
    <source>
    </source>
</evidence>
<evidence type="ECO:0000305" key="2"/>
<dbReference type="GO" id="GO:0005576">
    <property type="term" value="C:extracellular region"/>
    <property type="evidence" value="ECO:0007669"/>
    <property type="project" value="UniProtKB-SubCell"/>
</dbReference>
<dbReference type="GO" id="GO:0090729">
    <property type="term" value="F:toxin activity"/>
    <property type="evidence" value="ECO:0007669"/>
    <property type="project" value="UniProtKB-KW"/>
</dbReference>
<dbReference type="GO" id="GO:0006952">
    <property type="term" value="P:defense response"/>
    <property type="evidence" value="ECO:0007669"/>
    <property type="project" value="UniProtKB-KW"/>
</dbReference>
<dbReference type="GO" id="GO:0042311">
    <property type="term" value="P:vasodilation"/>
    <property type="evidence" value="ECO:0007669"/>
    <property type="project" value="UniProtKB-KW"/>
</dbReference>